<comment type="function">
    <text evidence="1">Binds to 23S rRNA. Forms part of two intersubunit bridges in the 70S ribosome.</text>
</comment>
<comment type="subunit">
    <text evidence="1">Part of the 50S ribosomal subunit. Forms a cluster with proteins L3 and L19. In the 70S ribosome, L14 and L19 interact and together make contacts with the 16S rRNA in bridges B5 and B8.</text>
</comment>
<comment type="similarity">
    <text evidence="1">Belongs to the universal ribosomal protein uL14 family.</text>
</comment>
<keyword id="KW-1185">Reference proteome</keyword>
<keyword id="KW-0687">Ribonucleoprotein</keyword>
<keyword id="KW-0689">Ribosomal protein</keyword>
<keyword id="KW-0694">RNA-binding</keyword>
<keyword id="KW-0699">rRNA-binding</keyword>
<feature type="chain" id="PRO_1000166941" description="Large ribosomal subunit protein uL14">
    <location>
        <begin position="1"/>
        <end position="122"/>
    </location>
</feature>
<proteinExistence type="inferred from homology"/>
<gene>
    <name evidence="1" type="primary">rplN</name>
    <name type="ordered locus">SUB0078</name>
</gene>
<dbReference type="EMBL" id="AM946015">
    <property type="protein sequence ID" value="CAR40456.1"/>
    <property type="molecule type" value="Genomic_DNA"/>
</dbReference>
<dbReference type="RefSeq" id="WP_012657640.1">
    <property type="nucleotide sequence ID" value="NC_012004.1"/>
</dbReference>
<dbReference type="SMR" id="B9DSW0"/>
<dbReference type="STRING" id="218495.SUB0078"/>
<dbReference type="GeneID" id="93825304"/>
<dbReference type="KEGG" id="sub:SUB0078"/>
<dbReference type="eggNOG" id="COG0093">
    <property type="taxonomic scope" value="Bacteria"/>
</dbReference>
<dbReference type="HOGENOM" id="CLU_095071_2_1_9"/>
<dbReference type="OrthoDB" id="9806379at2"/>
<dbReference type="Proteomes" id="UP000000449">
    <property type="component" value="Chromosome"/>
</dbReference>
<dbReference type="GO" id="GO:0022625">
    <property type="term" value="C:cytosolic large ribosomal subunit"/>
    <property type="evidence" value="ECO:0007669"/>
    <property type="project" value="TreeGrafter"/>
</dbReference>
<dbReference type="GO" id="GO:0070180">
    <property type="term" value="F:large ribosomal subunit rRNA binding"/>
    <property type="evidence" value="ECO:0007669"/>
    <property type="project" value="TreeGrafter"/>
</dbReference>
<dbReference type="GO" id="GO:0003735">
    <property type="term" value="F:structural constituent of ribosome"/>
    <property type="evidence" value="ECO:0007669"/>
    <property type="project" value="InterPro"/>
</dbReference>
<dbReference type="GO" id="GO:0006412">
    <property type="term" value="P:translation"/>
    <property type="evidence" value="ECO:0007669"/>
    <property type="project" value="UniProtKB-UniRule"/>
</dbReference>
<dbReference type="CDD" id="cd00337">
    <property type="entry name" value="Ribosomal_uL14"/>
    <property type="match status" value="1"/>
</dbReference>
<dbReference type="FunFam" id="2.40.150.20:FF:000001">
    <property type="entry name" value="50S ribosomal protein L14"/>
    <property type="match status" value="1"/>
</dbReference>
<dbReference type="Gene3D" id="2.40.150.20">
    <property type="entry name" value="Ribosomal protein L14"/>
    <property type="match status" value="1"/>
</dbReference>
<dbReference type="HAMAP" id="MF_01367">
    <property type="entry name" value="Ribosomal_uL14"/>
    <property type="match status" value="1"/>
</dbReference>
<dbReference type="InterPro" id="IPR000218">
    <property type="entry name" value="Ribosomal_uL14"/>
</dbReference>
<dbReference type="InterPro" id="IPR005745">
    <property type="entry name" value="Ribosomal_uL14_bac-type"/>
</dbReference>
<dbReference type="InterPro" id="IPR019972">
    <property type="entry name" value="Ribosomal_uL14_CS"/>
</dbReference>
<dbReference type="InterPro" id="IPR036853">
    <property type="entry name" value="Ribosomal_uL14_sf"/>
</dbReference>
<dbReference type="NCBIfam" id="TIGR01067">
    <property type="entry name" value="rplN_bact"/>
    <property type="match status" value="1"/>
</dbReference>
<dbReference type="PANTHER" id="PTHR11761">
    <property type="entry name" value="50S/60S RIBOSOMAL PROTEIN L14/L23"/>
    <property type="match status" value="1"/>
</dbReference>
<dbReference type="PANTHER" id="PTHR11761:SF3">
    <property type="entry name" value="LARGE RIBOSOMAL SUBUNIT PROTEIN UL14M"/>
    <property type="match status" value="1"/>
</dbReference>
<dbReference type="Pfam" id="PF00238">
    <property type="entry name" value="Ribosomal_L14"/>
    <property type="match status" value="1"/>
</dbReference>
<dbReference type="SMART" id="SM01374">
    <property type="entry name" value="Ribosomal_L14"/>
    <property type="match status" value="1"/>
</dbReference>
<dbReference type="SUPFAM" id="SSF50193">
    <property type="entry name" value="Ribosomal protein L14"/>
    <property type="match status" value="1"/>
</dbReference>
<dbReference type="PROSITE" id="PS00049">
    <property type="entry name" value="RIBOSOMAL_L14"/>
    <property type="match status" value="1"/>
</dbReference>
<reference key="1">
    <citation type="journal article" date="2009" name="BMC Genomics">
        <title>Evidence for niche adaptation in the genome of the bovine pathogen Streptococcus uberis.</title>
        <authorList>
            <person name="Ward P.N."/>
            <person name="Holden M.T.G."/>
            <person name="Leigh J.A."/>
            <person name="Lennard N."/>
            <person name="Bignell A."/>
            <person name="Barron A."/>
            <person name="Clark L."/>
            <person name="Quail M.A."/>
            <person name="Woodward J."/>
            <person name="Barrell B.G."/>
            <person name="Egan S.A."/>
            <person name="Field T.R."/>
            <person name="Maskell D."/>
            <person name="Kehoe M."/>
            <person name="Dowson C.G."/>
            <person name="Chanter N."/>
            <person name="Whatmore A.M."/>
            <person name="Bentley S.D."/>
            <person name="Parkhill J."/>
        </authorList>
    </citation>
    <scope>NUCLEOTIDE SEQUENCE [LARGE SCALE GENOMIC DNA]</scope>
    <source>
        <strain>ATCC BAA-854 / 0140J</strain>
    </source>
</reference>
<sequence length="122" mass="13093">MIQQETRLKVADNSGAREILTIKVLGGSGRKFANIGDVIVASVKQATPGGAVKKGDVVKAVIVRTKTGARRPDGSYIKFDDNAAVIIRDDKTPRGTRIFGPVAREMREAGYMKIVSLAPEVL</sequence>
<protein>
    <recommendedName>
        <fullName evidence="1">Large ribosomal subunit protein uL14</fullName>
    </recommendedName>
    <alternativeName>
        <fullName evidence="2">50S ribosomal protein L14</fullName>
    </alternativeName>
</protein>
<organism>
    <name type="scientific">Streptococcus uberis (strain ATCC BAA-854 / 0140J)</name>
    <dbReference type="NCBI Taxonomy" id="218495"/>
    <lineage>
        <taxon>Bacteria</taxon>
        <taxon>Bacillati</taxon>
        <taxon>Bacillota</taxon>
        <taxon>Bacilli</taxon>
        <taxon>Lactobacillales</taxon>
        <taxon>Streptococcaceae</taxon>
        <taxon>Streptococcus</taxon>
    </lineage>
</organism>
<accession>B9DSW0</accession>
<evidence type="ECO:0000255" key="1">
    <source>
        <dbReference type="HAMAP-Rule" id="MF_01367"/>
    </source>
</evidence>
<evidence type="ECO:0000305" key="2"/>
<name>RL14_STRU0</name>